<organismHost>
    <name type="scientific">Homo sapiens</name>
    <name type="common">Human</name>
    <dbReference type="NCBI Taxonomy" id="9606"/>
</organismHost>
<organism>
    <name type="scientific">Human cytomegalovirus (strain AD169)</name>
    <name type="common">HHV-5</name>
    <name type="synonym">Human herpesvirus 5</name>
    <dbReference type="NCBI Taxonomy" id="10360"/>
    <lineage>
        <taxon>Viruses</taxon>
        <taxon>Duplodnaviria</taxon>
        <taxon>Heunggongvirae</taxon>
        <taxon>Peploviricota</taxon>
        <taxon>Herviviricetes</taxon>
        <taxon>Herpesvirales</taxon>
        <taxon>Orthoherpesviridae</taxon>
        <taxon>Betaherpesvirinae</taxon>
        <taxon>Cytomegalovirus</taxon>
        <taxon>Cytomegalovirus humanbeta5</taxon>
        <taxon>Human cytomegalovirus</taxon>
    </lineage>
</organism>
<accession>P09714</accession>
<accession>Q7M6J1</accession>
<dbReference type="EMBL" id="X17403">
    <property type="protein sequence ID" value="CAA35312.1"/>
    <property type="status" value="ALT_INIT"/>
    <property type="molecule type" value="Genomic_DNA"/>
</dbReference>
<dbReference type="EMBL" id="X04650">
    <property type="protein sequence ID" value="CAB37095.1"/>
    <property type="status" value="ALT_INIT"/>
    <property type="molecule type" value="Genomic_DNA"/>
</dbReference>
<dbReference type="EMBL" id="BK000394">
    <property type="protein sequence ID" value="DAA00197.1"/>
    <property type="molecule type" value="Genomic_DNA"/>
</dbReference>
<dbReference type="PIR" id="D26078">
    <property type="entry name" value="QQBEC4"/>
</dbReference>
<dbReference type="Proteomes" id="UP000008991">
    <property type="component" value="Segment"/>
</dbReference>
<dbReference type="Proteomes" id="UP000008992">
    <property type="component" value="Segment"/>
</dbReference>
<comment type="similarity">
    <text evidence="2">Belongs to the herpesviridae US1 family.</text>
</comment>
<comment type="sequence caution" evidence="2">
    <conflict type="erroneous initiation">
        <sequence resource="EMBL-CDS" id="CAA35312"/>
    </conflict>
</comment>
<comment type="sequence caution" evidence="2">
    <conflict type="erroneous initiation">
        <sequence resource="EMBL-CDS" id="CAB37095"/>
    </conflict>
</comment>
<reference key="1">
    <citation type="journal article" date="1986" name="J. Mol. Biol.">
        <title>Sequence of the short unique region, short repeats, and part of the long repeats of human cytomegalovirus.</title>
        <authorList>
            <person name="Weston K.M."/>
            <person name="Barrell B.G."/>
        </authorList>
    </citation>
    <scope>NUCLEOTIDE SEQUENCE [GENOMIC DNA]</scope>
</reference>
<reference key="2">
    <citation type="journal article" date="1990" name="Curr. Top. Microbiol. Immunol.">
        <title>Analysis of the protein-coding content of the sequence of human cytomegalovirus strain AD169.</title>
        <authorList>
            <person name="Chee M.S."/>
            <person name="Bankier A.T."/>
            <person name="Beck S."/>
            <person name="Bohni R."/>
            <person name="Brown C.M."/>
            <person name="Cerny R."/>
            <person name="Horsnell T."/>
            <person name="Hutchison C.A. III"/>
            <person name="Kouzarides T."/>
            <person name="Martignetti J.A."/>
            <person name="Preddie E."/>
            <person name="Satchwell S.C."/>
            <person name="Tomlinson P."/>
            <person name="Weston K.M."/>
            <person name="Barrell B.G."/>
        </authorList>
    </citation>
    <scope>NUCLEOTIDE SEQUENCE [LARGE SCALE GENOMIC DNA]</scope>
</reference>
<reference key="3">
    <citation type="journal article" date="2003" name="J. Gen. Virol.">
        <title>The human cytomegalovirus genome revisited: comparison with the chimpanzee cytomegalovirus genome.</title>
        <authorList>
            <person name="Davison A.J."/>
            <person name="Dolan A."/>
            <person name="Akter P."/>
            <person name="Addison C."/>
            <person name="Dargan D.J."/>
            <person name="Alcendor D.J."/>
            <person name="McGeoch D.J."/>
            <person name="Hayward G.S."/>
        </authorList>
    </citation>
    <scope>GENOME REANNOTATION</scope>
</reference>
<reference key="4">
    <citation type="journal article" date="2003" name="J. Gen. Virol.">
        <authorList>
            <person name="Davison A.J."/>
            <person name="Dolan A."/>
            <person name="Akter P."/>
            <person name="Addison C."/>
            <person name="Dargan D.J."/>
            <person name="Alcendor D.J."/>
            <person name="McGeoch D.J."/>
            <person name="Hayward G.S."/>
        </authorList>
    </citation>
    <scope>ERRATUM OF PUBMED:12533697</scope>
</reference>
<gene>
    <name type="primary">US1</name>
</gene>
<sequence length="156" mass="17765">MASGLGDLSVGVSSLPMRELAWRRVADDSHDLWCCCMDWKAHVEYAHPASELRPGSGGWPEHAEAQWRQQVHAAHDVWCNCGDWQGHALRSRSRTAESGRSSSSSSVSVLSDGDQQPWWRRLRVKRPKFPSWARRWTQRHDSEERASQQAENDSTS</sequence>
<name>US01_HCMVA</name>
<feature type="chain" id="PRO_0000115267" description="Uncharacterized protein HQLF3">
    <location>
        <begin position="1"/>
        <end position="156"/>
    </location>
</feature>
<feature type="region of interest" description="Disordered" evidence="1">
    <location>
        <begin position="90"/>
        <end position="114"/>
    </location>
</feature>
<feature type="region of interest" description="Disordered" evidence="1">
    <location>
        <begin position="133"/>
        <end position="156"/>
    </location>
</feature>
<feature type="compositionally biased region" description="Low complexity" evidence="1">
    <location>
        <begin position="96"/>
        <end position="111"/>
    </location>
</feature>
<feature type="compositionally biased region" description="Polar residues" evidence="1">
    <location>
        <begin position="147"/>
        <end position="156"/>
    </location>
</feature>
<protein>
    <recommendedName>
        <fullName>Uncharacterized protein HQLF3</fullName>
    </recommendedName>
</protein>
<proteinExistence type="inferred from homology"/>
<keyword id="KW-1185">Reference proteome</keyword>
<evidence type="ECO:0000256" key="1">
    <source>
        <dbReference type="SAM" id="MobiDB-lite"/>
    </source>
</evidence>
<evidence type="ECO:0000305" key="2"/>